<sequence>MADKGSVAAKSLTNSAPLSIFSYCAASILMTVTNKYAVSGVDFNFNFFLLAVQGIVCITLISSLKQLNVITFREFNKVEAKKWFPIAVLLVVMIYTSSKALQYLSIPIYTIFKNLTIILIAYGEVIWFGGRVTNLALGSFVLMVLSSAVASYGDSNVDTGKLNFNIGYFWMFTNCFSSAAFVLFMRKRIKLTNFKDFDTMYYNNLLSIPILLFASLTTEDWSAKNIAQNFPEDTKYAVIASMIISGMSAVGISYTSAWCVRVTSSTTYSMVGALNKLPIALSGLLFFKAPINFYSISSIFIGFAAGLVYAIAKQKQKKEDELQLPTDKS</sequence>
<comment type="function">
    <text evidence="1">Involved in the import of GDP-mannose from the cytoplasm into the Golgi lumen.</text>
</comment>
<comment type="subunit">
    <text evidence="1">Homooligomer.</text>
</comment>
<comment type="subcellular location">
    <subcellularLocation>
        <location evidence="3">Golgi apparatus membrane</location>
        <topology evidence="3">Multi-pass membrane protein</topology>
    </subcellularLocation>
    <subcellularLocation>
        <location evidence="3">Cytoplasmic vesicle membrane</location>
        <topology evidence="3">Multi-pass membrane protein</topology>
    </subcellularLocation>
    <subcellularLocation>
        <location evidence="3">Endoplasmic reticulum membrane</location>
        <topology evidence="3">Multi-pass membrane protein</topology>
    </subcellularLocation>
</comment>
<comment type="similarity">
    <text evidence="4">Belongs to the TPT transporter family. SLC35D subfamily.</text>
</comment>
<evidence type="ECO:0000250" key="1"/>
<evidence type="ECO:0000255" key="2"/>
<evidence type="ECO:0000269" key="3">
    <source>
    </source>
</evidence>
<evidence type="ECO:0000305" key="4"/>
<name>GMT_PICPA</name>
<keyword id="KW-0968">Cytoplasmic vesicle</keyword>
<keyword id="KW-0256">Endoplasmic reticulum</keyword>
<keyword id="KW-0333">Golgi apparatus</keyword>
<keyword id="KW-0472">Membrane</keyword>
<keyword id="KW-0762">Sugar transport</keyword>
<keyword id="KW-0812">Transmembrane</keyword>
<keyword id="KW-1133">Transmembrane helix</keyword>
<keyword id="KW-0813">Transport</keyword>
<gene>
    <name type="primary">VIG4</name>
    <name type="synonym">VRG4</name>
</gene>
<accession>Q2AAF6</accession>
<organism>
    <name type="scientific">Komagataella pastoris</name>
    <name type="common">Yeast</name>
    <name type="synonym">Pichia pastoris</name>
    <dbReference type="NCBI Taxonomy" id="4922"/>
    <lineage>
        <taxon>Eukaryota</taxon>
        <taxon>Fungi</taxon>
        <taxon>Dikarya</taxon>
        <taxon>Ascomycota</taxon>
        <taxon>Saccharomycotina</taxon>
        <taxon>Pichiomycetes</taxon>
        <taxon>Pichiales</taxon>
        <taxon>Pichiaceae</taxon>
        <taxon>Komagataella</taxon>
    </lineage>
</organism>
<feature type="chain" id="PRO_0000333534" description="GDP-mannose transporter">
    <location>
        <begin position="1"/>
        <end position="329"/>
    </location>
</feature>
<feature type="topological domain" description="Cytoplasmic" evidence="1">
    <location>
        <begin position="1"/>
        <end position="11"/>
    </location>
</feature>
<feature type="transmembrane region" description="Helical" evidence="2">
    <location>
        <begin position="12"/>
        <end position="32"/>
    </location>
</feature>
<feature type="topological domain" description="Lumenal" evidence="1">
    <location>
        <begin position="33"/>
        <end position="40"/>
    </location>
</feature>
<feature type="transmembrane region" description="Helical" evidence="2">
    <location>
        <begin position="41"/>
        <end position="61"/>
    </location>
</feature>
<feature type="topological domain" description="Cytoplasmic" evidence="1">
    <location>
        <begin position="62"/>
        <end position="83"/>
    </location>
</feature>
<feature type="transmembrane region" description="Helical" evidence="2">
    <location>
        <begin position="84"/>
        <end position="104"/>
    </location>
</feature>
<feature type="topological domain" description="Lumenal" evidence="1">
    <location>
        <begin position="105"/>
        <end position="107"/>
    </location>
</feature>
<feature type="transmembrane region" description="Helical" evidence="2">
    <location>
        <begin position="108"/>
        <end position="128"/>
    </location>
</feature>
<feature type="topological domain" description="Cytoplasmic" evidence="1">
    <location>
        <begin position="129"/>
        <end position="131"/>
    </location>
</feature>
<feature type="transmembrane region" description="Helical" evidence="2">
    <location>
        <begin position="132"/>
        <end position="152"/>
    </location>
</feature>
<feature type="topological domain" description="Lumenal" evidence="1">
    <location>
        <begin position="153"/>
        <end position="163"/>
    </location>
</feature>
<feature type="transmembrane region" description="Helical" evidence="2">
    <location>
        <begin position="164"/>
        <end position="184"/>
    </location>
</feature>
<feature type="topological domain" description="Cytoplasmic" evidence="1">
    <location>
        <begin position="185"/>
        <end position="196"/>
    </location>
</feature>
<feature type="transmembrane region" description="Helical" evidence="2">
    <location>
        <begin position="197"/>
        <end position="217"/>
    </location>
</feature>
<feature type="topological domain" description="Lumenal" evidence="1">
    <location>
        <begin position="218"/>
        <end position="237"/>
    </location>
</feature>
<feature type="transmembrane region" description="Helical" evidence="2">
    <location>
        <begin position="238"/>
        <end position="258"/>
    </location>
</feature>
<feature type="topological domain" description="Cytoplasmic" evidence="1">
    <location>
        <begin position="259"/>
        <end position="266"/>
    </location>
</feature>
<feature type="transmembrane region" description="Helical" evidence="2">
    <location>
        <begin position="267"/>
        <end position="287"/>
    </location>
</feature>
<feature type="topological domain" description="Lumenal" evidence="1">
    <location>
        <begin position="288"/>
        <end position="290"/>
    </location>
</feature>
<feature type="transmembrane region" description="Helical" evidence="2">
    <location>
        <begin position="291"/>
        <end position="311"/>
    </location>
</feature>
<feature type="topological domain" description="Cytoplasmic" evidence="1">
    <location>
        <begin position="312"/>
        <end position="329"/>
    </location>
</feature>
<proteinExistence type="inferred from homology"/>
<dbReference type="EMBL" id="AB252397">
    <property type="protein sequence ID" value="BAE80635.1"/>
    <property type="molecule type" value="Genomic_DNA"/>
</dbReference>
<dbReference type="SMR" id="Q2AAF6"/>
<dbReference type="GO" id="GO:0030659">
    <property type="term" value="C:cytoplasmic vesicle membrane"/>
    <property type="evidence" value="ECO:0007669"/>
    <property type="project" value="UniProtKB-SubCell"/>
</dbReference>
<dbReference type="GO" id="GO:0005789">
    <property type="term" value="C:endoplasmic reticulum membrane"/>
    <property type="evidence" value="ECO:0007669"/>
    <property type="project" value="UniProtKB-SubCell"/>
</dbReference>
<dbReference type="GO" id="GO:0000139">
    <property type="term" value="C:Golgi membrane"/>
    <property type="evidence" value="ECO:0007669"/>
    <property type="project" value="UniProtKB-SubCell"/>
</dbReference>
<dbReference type="GO" id="GO:0055085">
    <property type="term" value="P:transmembrane transport"/>
    <property type="evidence" value="ECO:0007669"/>
    <property type="project" value="InterPro"/>
</dbReference>
<dbReference type="InterPro" id="IPR013657">
    <property type="entry name" value="SCL35B1-4/HUT1"/>
</dbReference>
<dbReference type="InterPro" id="IPR050186">
    <property type="entry name" value="TPT_transporter"/>
</dbReference>
<dbReference type="NCBIfam" id="TIGR00803">
    <property type="entry name" value="nst"/>
    <property type="match status" value="1"/>
</dbReference>
<dbReference type="PANTHER" id="PTHR11132">
    <property type="entry name" value="SOLUTE CARRIER FAMILY 35"/>
    <property type="match status" value="1"/>
</dbReference>
<dbReference type="Pfam" id="PF08449">
    <property type="entry name" value="UAA"/>
    <property type="match status" value="1"/>
</dbReference>
<dbReference type="SUPFAM" id="SSF103481">
    <property type="entry name" value="Multidrug resistance efflux transporter EmrE"/>
    <property type="match status" value="1"/>
</dbReference>
<reference key="1">
    <citation type="journal article" date="2006" name="J. Gen. Appl. Microbiol.">
        <title>Molecular cloning and characterization of a Pichia pastoris ortholog of the yeast Golgi GDP-mannose transporter gene.</title>
        <authorList>
            <person name="Arakawa K."/>
            <person name="Abe M."/>
            <person name="Noda Y."/>
            <person name="Adachi H."/>
            <person name="Yoda K."/>
        </authorList>
    </citation>
    <scope>NUCLEOTIDE SEQUENCE [GENOMIC DNA]</scope>
    <scope>SUBCELLULAR LOCATION</scope>
</reference>
<protein>
    <recommendedName>
        <fullName>GDP-mannose transporter</fullName>
        <shortName>GMT</shortName>
    </recommendedName>
</protein>